<sequence length="833" mass="93003">MRYSKLFLCAGLTLATLPCWGRAYTFDSTMLDTNSGESIDVSLFNQGLQLPGNYFVNVFVNGRKVDSGNIDFRLEKHNGKELLWPCLSSLQLTKYGIDIDKYPDLIKSGTEQCVDLLAIPHSDVQFYFNQQKLSLIVPPQALLPRFDGIMPMQLWDDGIPALFMNYNTNMQTRKFREGGKSLDSYYAQLQPGLNIGAWRFRSSTSWWKQQGWQRSYIYAERGLNTIKSRLTLGETYSDSSIFDSIPIKGIKIASDESMVPYYQWNFAPVVRGIARTQARVEVLRDGYTVSNELVPSGPFELANLPLGGGSGELKVIIHESDGTKQVFTVPYDTPAVALRKGYFEYSMMGGEYRPANDLTQTSYVGALGMKYGLPRNLTLYGGLQGSQNYHAAALGIGAMLGDFGAISTDVTQADSQKNKQKKESGQRWRVRYNKYLQSGTSLNIASEEYATEGFNKLADTLNTYCKPNTRNDCRFDYAKPKNKVQFNLSQSIPGSGTLNFSGYRKNYWRDSRSTTSFSVGYNHFFRNGMSLTLNLSKTQNINKYGEKTSELLSNIWLSFPLSRWLGNNSINSNYQMTSDSHGNTTHEVGVYGEAFDRQLYWDVRERFNEKGRKYTSNALNLNYRGTYGEISGNYSYDQTQSQLGIGVNGNMVITQYGITAGQKTGDTIALVQAPDISGASVGYWPGMKTDFRGYTNYGYLTPYRENKVEINPVTLPNDAEITNNIVSVIPTKGAVVLAKFNARIGGRLFLHLKRSDNKPVPFGSIVTIEGQSSSSGIVGDNSGVYLTGLPKKSKILVKWGRDKNQSCSSNVVLPEKTDISGAYRLSTTCILNN</sequence>
<gene>
    <name type="primary">caf1A</name>
    <name type="ordered locus">YPMT1.83</name>
    <name type="ordered locus">Y1099</name>
    <name type="ordered locus">YP_pMT083</name>
</gene>
<protein>
    <recommendedName>
        <fullName>F1 capsule-anchoring protein</fullName>
    </recommendedName>
</protein>
<dbReference type="EMBL" id="X61996">
    <property type="protein sequence ID" value="CAA43968.1"/>
    <property type="molecule type" value="Genomic_DNA"/>
</dbReference>
<dbReference type="EMBL" id="AF074611">
    <property type="protein sequence ID" value="AAC82757.1"/>
    <property type="molecule type" value="Genomic_DNA"/>
</dbReference>
<dbReference type="EMBL" id="AF053947">
    <property type="protein sequence ID" value="AAC13219.1"/>
    <property type="molecule type" value="Genomic_DNA"/>
</dbReference>
<dbReference type="EMBL" id="AL117211">
    <property type="protein sequence ID" value="CAB55265.1"/>
    <property type="molecule type" value="Genomic_DNA"/>
</dbReference>
<dbReference type="EMBL" id="AE017045">
    <property type="protein sequence ID" value="AAS58715.1"/>
    <property type="molecule type" value="Genomic_DNA"/>
</dbReference>
<dbReference type="PIR" id="S20387">
    <property type="entry name" value="S20387"/>
</dbReference>
<dbReference type="PIR" id="T14703">
    <property type="entry name" value="T14703"/>
</dbReference>
<dbReference type="RefSeq" id="NP_395429.1">
    <property type="nucleotide sequence ID" value="NC_003134.1"/>
</dbReference>
<dbReference type="RefSeq" id="NP_857693.1">
    <property type="nucleotide sequence ID" value="NC_004835.1"/>
</dbReference>
<dbReference type="RefSeq" id="WP_002211763.1">
    <property type="nucleotide sequence ID" value="NZ_WUCL01000053.1"/>
</dbReference>
<dbReference type="RefSeq" id="YP_093953.1">
    <property type="nucleotide sequence ID" value="NC_006323.1"/>
</dbReference>
<dbReference type="PDB" id="2XET">
    <property type="method" value="X-ray"/>
    <property type="resolution" value="1.60 A"/>
    <property type="chains" value="A/B=745-833"/>
</dbReference>
<dbReference type="PDB" id="3FCG">
    <property type="method" value="X-ray"/>
    <property type="resolution" value="2.85 A"/>
    <property type="chains" value="A/B=253-341"/>
</dbReference>
<dbReference type="PDB" id="4B0E">
    <property type="method" value="X-ray"/>
    <property type="resolution" value="2.00 A"/>
    <property type="chains" value="A/B/C/D=23-158"/>
</dbReference>
<dbReference type="PDB" id="4B0M">
    <property type="method" value="X-ray"/>
    <property type="resolution" value="1.80 A"/>
    <property type="chains" value="A=23-158"/>
</dbReference>
<dbReference type="PDBsum" id="2XET"/>
<dbReference type="PDBsum" id="3FCG"/>
<dbReference type="PDBsum" id="4B0E"/>
<dbReference type="PDBsum" id="4B0M"/>
<dbReference type="SMR" id="P26949"/>
<dbReference type="DIP" id="DIP-59979N"/>
<dbReference type="IntAct" id="P26949">
    <property type="interactions" value="1"/>
</dbReference>
<dbReference type="TCDB" id="1.B.11.3.8">
    <property type="family name" value="the outer membrane fimbrial usher porin (fup) family"/>
</dbReference>
<dbReference type="DNASU" id="1149243"/>
<dbReference type="EnsemblBacteria" id="AAS58715">
    <property type="protein sequence ID" value="AAS58715"/>
    <property type="gene ID" value="YP_pMT083"/>
</dbReference>
<dbReference type="GeneID" id="57977635"/>
<dbReference type="KEGG" id="ype:YPMT1.83"/>
<dbReference type="KEGG" id="ypk:caf1A.pl"/>
<dbReference type="KEGG" id="ypm:YP_pMT083"/>
<dbReference type="PATRIC" id="fig|214092.21.peg.211"/>
<dbReference type="HOGENOM" id="CLU_009120_3_1_6"/>
<dbReference type="OMA" id="RMESYSA"/>
<dbReference type="EvolutionaryTrace" id="P26949"/>
<dbReference type="Proteomes" id="UP000000815">
    <property type="component" value="Plasmid pMT1"/>
</dbReference>
<dbReference type="Proteomes" id="UP000001019">
    <property type="component" value="Plasmid pMT1"/>
</dbReference>
<dbReference type="Proteomes" id="UP000002490">
    <property type="component" value="Plasmid pMT-1"/>
</dbReference>
<dbReference type="GO" id="GO:0009279">
    <property type="term" value="C:cell outer membrane"/>
    <property type="evidence" value="ECO:0000318"/>
    <property type="project" value="GO_Central"/>
</dbReference>
<dbReference type="GO" id="GO:0015473">
    <property type="term" value="F:fimbrial usher porin activity"/>
    <property type="evidence" value="ECO:0000318"/>
    <property type="project" value="GO_Central"/>
</dbReference>
<dbReference type="GO" id="GO:0009297">
    <property type="term" value="P:pilus assembly"/>
    <property type="evidence" value="ECO:0000318"/>
    <property type="project" value="GO_Central"/>
</dbReference>
<dbReference type="FunFam" id="2.60.40.2070:FF:000001">
    <property type="entry name" value="Fimbrial outer membrane usher protein"/>
    <property type="match status" value="1"/>
</dbReference>
<dbReference type="FunFam" id="3.10.20.410:FF:000001">
    <property type="entry name" value="Fimbrial outer membrane usher protein"/>
    <property type="match status" value="1"/>
</dbReference>
<dbReference type="FunFam" id="2.60.40.2610:FF:000001">
    <property type="entry name" value="Outer membrane fimbrial usher protein"/>
    <property type="match status" value="1"/>
</dbReference>
<dbReference type="Gene3D" id="2.60.40.2070">
    <property type="match status" value="1"/>
</dbReference>
<dbReference type="Gene3D" id="2.60.40.3110">
    <property type="match status" value="1"/>
</dbReference>
<dbReference type="Gene3D" id="3.10.20.410">
    <property type="match status" value="1"/>
</dbReference>
<dbReference type="Gene3D" id="2.60.40.2610">
    <property type="entry name" value="Outer membrane usher protein FimD, plug domain"/>
    <property type="match status" value="1"/>
</dbReference>
<dbReference type="InterPro" id="IPR000015">
    <property type="entry name" value="Fimb_usher"/>
</dbReference>
<dbReference type="InterPro" id="IPR018030">
    <property type="entry name" value="Fimbrial_membr_usher_CS"/>
</dbReference>
<dbReference type="InterPro" id="IPR042186">
    <property type="entry name" value="FimD_plug_dom"/>
</dbReference>
<dbReference type="InterPro" id="IPR025949">
    <property type="entry name" value="PapC-like_C"/>
</dbReference>
<dbReference type="InterPro" id="IPR043142">
    <property type="entry name" value="PapC-like_C_sf"/>
</dbReference>
<dbReference type="InterPro" id="IPR025885">
    <property type="entry name" value="PapC_N"/>
</dbReference>
<dbReference type="InterPro" id="IPR037224">
    <property type="entry name" value="PapC_N_sf"/>
</dbReference>
<dbReference type="PANTHER" id="PTHR30451:SF9">
    <property type="entry name" value="F1 CAPSULE-ANCHORING PROTEIN"/>
    <property type="match status" value="1"/>
</dbReference>
<dbReference type="PANTHER" id="PTHR30451">
    <property type="entry name" value="OUTER MEMBRANE USHER PROTEIN"/>
    <property type="match status" value="1"/>
</dbReference>
<dbReference type="Pfam" id="PF13953">
    <property type="entry name" value="PapC_C"/>
    <property type="match status" value="1"/>
</dbReference>
<dbReference type="Pfam" id="PF13954">
    <property type="entry name" value="PapC_N"/>
    <property type="match status" value="1"/>
</dbReference>
<dbReference type="Pfam" id="PF00577">
    <property type="entry name" value="Usher"/>
    <property type="match status" value="1"/>
</dbReference>
<dbReference type="SUPFAM" id="SSF141729">
    <property type="entry name" value="FimD N-terminal domain-like"/>
    <property type="match status" value="1"/>
</dbReference>
<dbReference type="PROSITE" id="PS01151">
    <property type="entry name" value="FIMBRIAL_USHER"/>
    <property type="match status" value="1"/>
</dbReference>
<comment type="function">
    <text>A probable role in capsular biogenesis. It is likely that the caf1A molecule binds F1 antigen subunits during the extracellular secretion process.</text>
</comment>
<comment type="subcellular location">
    <subcellularLocation>
        <location>Cell outer membrane</location>
        <topology>Multi-pass membrane protein</topology>
    </subcellularLocation>
</comment>
<comment type="similarity">
    <text evidence="2">Belongs to the fimbrial export usher family.</text>
</comment>
<geneLocation type="plasmid">
    <name>pMT1</name>
    <name>pMT-1</name>
</geneLocation>
<geneLocation type="plasmid">
    <name>pFra</name>
</geneLocation>
<evidence type="ECO:0000255" key="1"/>
<evidence type="ECO:0000305" key="2"/>
<evidence type="ECO:0007829" key="3">
    <source>
        <dbReference type="PDB" id="2XET"/>
    </source>
</evidence>
<evidence type="ECO:0007829" key="4">
    <source>
        <dbReference type="PDB" id="3FCG"/>
    </source>
</evidence>
<evidence type="ECO:0007829" key="5">
    <source>
        <dbReference type="PDB" id="4B0E"/>
    </source>
</evidence>
<evidence type="ECO:0007829" key="6">
    <source>
        <dbReference type="PDB" id="4B0M"/>
    </source>
</evidence>
<proteinExistence type="evidence at protein level"/>
<feature type="signal peptide" evidence="1">
    <location>
        <begin position="1"/>
        <end position="25"/>
    </location>
</feature>
<feature type="chain" id="PRO_0000009300" description="F1 capsule-anchoring protein">
    <location>
        <begin position="26"/>
        <end position="833"/>
    </location>
</feature>
<feature type="disulfide bond" evidence="1">
    <location>
        <begin position="807"/>
        <end position="829"/>
    </location>
</feature>
<feature type="sequence conflict" description="In Ref. 1; CAA43968." evidence="2" ref="1">
    <original>AL</original>
    <variation>VF</variation>
    <location>
        <begin position="366"/>
        <end position="367"/>
    </location>
</feature>
<feature type="sequence conflict" description="In Ref. 1; CAA43968." evidence="2" ref="1">
    <original>L</original>
    <variation>F</variation>
    <location>
        <position position="377"/>
    </location>
</feature>
<feature type="sequence conflict" description="In Ref. 1; CAA43968." evidence="2" ref="1">
    <original>A</original>
    <variation>E</variation>
    <location>
        <position position="392"/>
    </location>
</feature>
<feature type="sequence conflict" description="In Ref. 1; CAA43968." evidence="2" ref="1">
    <original>N</original>
    <variation>Y</variation>
    <location>
        <position position="706"/>
    </location>
</feature>
<feature type="helix" evidence="6">
    <location>
        <begin position="42"/>
        <end position="45"/>
    </location>
</feature>
<feature type="strand" evidence="6">
    <location>
        <begin position="52"/>
        <end position="60"/>
    </location>
</feature>
<feature type="strand" evidence="6">
    <location>
        <begin position="63"/>
        <end position="77"/>
    </location>
</feature>
<feature type="strand" evidence="6">
    <location>
        <begin position="80"/>
        <end position="85"/>
    </location>
</feature>
<feature type="helix" evidence="6">
    <location>
        <begin position="89"/>
        <end position="94"/>
    </location>
</feature>
<feature type="helix" evidence="6">
    <location>
        <begin position="99"/>
        <end position="101"/>
    </location>
</feature>
<feature type="helix" evidence="6">
    <location>
        <begin position="103"/>
        <end position="105"/>
    </location>
</feature>
<feature type="strand" evidence="5">
    <location>
        <begin position="111"/>
        <end position="113"/>
    </location>
</feature>
<feature type="helix" evidence="6">
    <location>
        <begin position="116"/>
        <end position="118"/>
    </location>
</feature>
<feature type="strand" evidence="6">
    <location>
        <begin position="119"/>
        <end position="121"/>
    </location>
</feature>
<feature type="strand" evidence="6">
    <location>
        <begin position="123"/>
        <end position="127"/>
    </location>
</feature>
<feature type="turn" evidence="6">
    <location>
        <begin position="128"/>
        <end position="131"/>
    </location>
</feature>
<feature type="strand" evidence="6">
    <location>
        <begin position="132"/>
        <end position="136"/>
    </location>
</feature>
<feature type="helix" evidence="6">
    <location>
        <begin position="139"/>
        <end position="141"/>
    </location>
</feature>
<feature type="strand" evidence="6">
    <location>
        <begin position="147"/>
        <end position="150"/>
    </location>
</feature>
<feature type="strand" evidence="4">
    <location>
        <begin position="261"/>
        <end position="263"/>
    </location>
</feature>
<feature type="strand" evidence="4">
    <location>
        <begin position="266"/>
        <end position="286"/>
    </location>
</feature>
<feature type="strand" evidence="4">
    <location>
        <begin position="288"/>
        <end position="294"/>
    </location>
</feature>
<feature type="strand" evidence="4">
    <location>
        <begin position="296"/>
        <end position="301"/>
    </location>
</feature>
<feature type="strand" evidence="4">
    <location>
        <begin position="311"/>
        <end position="318"/>
    </location>
</feature>
<feature type="strand" evidence="4">
    <location>
        <begin position="324"/>
        <end position="331"/>
    </location>
</feature>
<feature type="strand" evidence="3">
    <location>
        <begin position="746"/>
        <end position="754"/>
    </location>
</feature>
<feature type="strand" evidence="3">
    <location>
        <begin position="765"/>
        <end position="768"/>
    </location>
</feature>
<feature type="strand" evidence="3">
    <location>
        <begin position="782"/>
        <end position="789"/>
    </location>
</feature>
<feature type="strand" evidence="3">
    <location>
        <begin position="791"/>
        <end position="799"/>
    </location>
</feature>
<feature type="strand" evidence="3">
    <location>
        <begin position="805"/>
        <end position="812"/>
    </location>
</feature>
<feature type="strand" evidence="3">
    <location>
        <begin position="823"/>
        <end position="831"/>
    </location>
</feature>
<accession>P26949</accession>
<accession>O68773</accession>
<keyword id="KW-0002">3D-structure</keyword>
<keyword id="KW-0998">Cell outer membrane</keyword>
<keyword id="KW-1015">Disulfide bond</keyword>
<keyword id="KW-0472">Membrane</keyword>
<keyword id="KW-0614">Plasmid</keyword>
<keyword id="KW-1185">Reference proteome</keyword>
<keyword id="KW-0732">Signal</keyword>
<keyword id="KW-0812">Transmembrane</keyword>
<keyword id="KW-1134">Transmembrane beta strand</keyword>
<keyword id="KW-0813">Transport</keyword>
<name>CAF1A_YERPE</name>
<reference key="1">
    <citation type="journal article" date="1992" name="FEBS Lett.">
        <title>A new gene of the f1 operon of Y. pestis involved in the capsule biogenesis.</title>
        <authorList>
            <person name="Karlyshev A.V."/>
            <person name="Galyov E.E."/>
            <person name="Smirnov O.Y."/>
            <person name="Guzayev A.P."/>
            <person name="Abramov V.M."/>
            <person name="Zav'yalov V.P."/>
        </authorList>
    </citation>
    <scope>NUCLEOTIDE SEQUENCE [GENOMIC DNA]</scope>
    <source>
        <plasmid>pFra</plasmid>
    </source>
</reference>
<reference key="2">
    <citation type="journal article" date="1998" name="J. Bacteriol.">
        <title>Structural organization of virulence-associated plasmids of Yersinia pestis.</title>
        <authorList>
            <person name="Hu P."/>
            <person name="Elliott J."/>
            <person name="McCready P."/>
            <person name="Skowronski E."/>
            <person name="Garnes J."/>
            <person name="Kobayashi A."/>
            <person name="Brubaker R.R."/>
            <person name="Garcia E."/>
        </authorList>
    </citation>
    <scope>NUCLEOTIDE SEQUENCE [GENOMIC DNA]</scope>
    <source>
        <strain>KIM5 / Biovar Mediaevalis</strain>
        <plasmid>pMT1 (pMT-1)</plasmid>
    </source>
</reference>
<reference key="3">
    <citation type="journal article" date="1998" name="Infect. Immun.">
        <title>Complete DNA sequence and detailed analysis of the Yersinia pestis KIM5 plasmid encoding murine toxin and capsular antigen.</title>
        <authorList>
            <person name="Lindler L.E."/>
            <person name="Plano G.V."/>
            <person name="Burland V."/>
            <person name="Mayhew G.F."/>
            <person name="Blattner F.R."/>
        </authorList>
    </citation>
    <scope>NUCLEOTIDE SEQUENCE [LARGE SCALE GENOMIC DNA]</scope>
    <source>
        <strain>KIM10+ / Biovar Mediaevalis</strain>
        <plasmid>pMT1 (pMT-1)</plasmid>
    </source>
</reference>
<reference key="4">
    <citation type="journal article" date="2001" name="Nature">
        <title>Genome sequence of Yersinia pestis, the causative agent of plague.</title>
        <authorList>
            <person name="Parkhill J."/>
            <person name="Wren B.W."/>
            <person name="Thomson N.R."/>
            <person name="Titball R.W."/>
            <person name="Holden M.T.G."/>
            <person name="Prentice M.B."/>
            <person name="Sebaihia M."/>
            <person name="James K.D."/>
            <person name="Churcher C.M."/>
            <person name="Mungall K.L."/>
            <person name="Baker S."/>
            <person name="Basham D."/>
            <person name="Bentley S.D."/>
            <person name="Brooks K."/>
            <person name="Cerdeno-Tarraga A.-M."/>
            <person name="Chillingworth T."/>
            <person name="Cronin A."/>
            <person name="Davies R.M."/>
            <person name="Davis P."/>
            <person name="Dougan G."/>
            <person name="Feltwell T."/>
            <person name="Hamlin N."/>
            <person name="Holroyd S."/>
            <person name="Jagels K."/>
            <person name="Karlyshev A.V."/>
            <person name="Leather S."/>
            <person name="Moule S."/>
            <person name="Oyston P.C.F."/>
            <person name="Quail M.A."/>
            <person name="Rutherford K.M."/>
            <person name="Simmonds M."/>
            <person name="Skelton J."/>
            <person name="Stevens K."/>
            <person name="Whitehead S."/>
            <person name="Barrell B.G."/>
        </authorList>
    </citation>
    <scope>NUCLEOTIDE SEQUENCE [LARGE SCALE GENOMIC DNA]</scope>
    <source>
        <strain>CO-92 / Biovar Orientalis</strain>
        <plasmid>pMT1 (pMT-1)</plasmid>
    </source>
</reference>
<reference key="5">
    <citation type="journal article" date="2004" name="DNA Res.">
        <title>Complete genome sequence of Yersinia pestis strain 91001, an isolate avirulent to humans.</title>
        <authorList>
            <person name="Song Y."/>
            <person name="Tong Z."/>
            <person name="Wang J."/>
            <person name="Wang L."/>
            <person name="Guo Z."/>
            <person name="Han Y."/>
            <person name="Zhang J."/>
            <person name="Pei D."/>
            <person name="Zhou D."/>
            <person name="Qin H."/>
            <person name="Pang X."/>
            <person name="Han Y."/>
            <person name="Zhai J."/>
            <person name="Li M."/>
            <person name="Cui B."/>
            <person name="Qi Z."/>
            <person name="Jin L."/>
            <person name="Dai R."/>
            <person name="Chen F."/>
            <person name="Li S."/>
            <person name="Ye C."/>
            <person name="Du Z."/>
            <person name="Lin W."/>
            <person name="Wang J."/>
            <person name="Yu J."/>
            <person name="Yang H."/>
            <person name="Wang J."/>
            <person name="Huang P."/>
            <person name="Yang R."/>
        </authorList>
    </citation>
    <scope>NUCLEOTIDE SEQUENCE [LARGE SCALE GENOMIC DNA]</scope>
    <source>
        <strain>91001 / Biovar Mediaevalis</strain>
        <plasmid>pMT1 (pMT-1)</plasmid>
    </source>
</reference>
<organism>
    <name type="scientific">Yersinia pestis</name>
    <dbReference type="NCBI Taxonomy" id="632"/>
    <lineage>
        <taxon>Bacteria</taxon>
        <taxon>Pseudomonadati</taxon>
        <taxon>Pseudomonadota</taxon>
        <taxon>Gammaproteobacteria</taxon>
        <taxon>Enterobacterales</taxon>
        <taxon>Yersiniaceae</taxon>
        <taxon>Yersinia</taxon>
    </lineage>
</organism>